<feature type="chain" id="PRO_0000219745" description="Photosystem II reaction center protein L">
    <location>
        <begin position="1"/>
        <end position="38"/>
    </location>
</feature>
<feature type="transmembrane region" description="Helical" evidence="1">
    <location>
        <begin position="17"/>
        <end position="37"/>
    </location>
</feature>
<organism>
    <name type="scientific">Muscari comosum</name>
    <name type="common">Tassel grape hyacinth</name>
    <name type="synonym">Leopoldia comosa</name>
    <dbReference type="NCBI Taxonomy" id="81770"/>
    <lineage>
        <taxon>Eukaryota</taxon>
        <taxon>Viridiplantae</taxon>
        <taxon>Streptophyta</taxon>
        <taxon>Embryophyta</taxon>
        <taxon>Tracheophyta</taxon>
        <taxon>Spermatophyta</taxon>
        <taxon>Magnoliopsida</taxon>
        <taxon>Liliopsida</taxon>
        <taxon>Asparagales</taxon>
        <taxon>Hyacinthaceae</taxon>
        <taxon>Hyacinthoideae</taxon>
        <taxon>Hyacintheae</taxon>
        <taxon>Muscari</taxon>
    </lineage>
</organism>
<name>PSBL_MUSCM</name>
<keyword id="KW-0150">Chloroplast</keyword>
<keyword id="KW-0472">Membrane</keyword>
<keyword id="KW-0602">Photosynthesis</keyword>
<keyword id="KW-0604">Photosystem II</keyword>
<keyword id="KW-0934">Plastid</keyword>
<keyword id="KW-0674">Reaction center</keyword>
<keyword id="KW-0793">Thylakoid</keyword>
<keyword id="KW-0812">Transmembrane</keyword>
<keyword id="KW-1133">Transmembrane helix</keyword>
<dbReference type="EMBL" id="AY147590">
    <property type="protein sequence ID" value="AAN32462.1"/>
    <property type="molecule type" value="Genomic_DNA"/>
</dbReference>
<dbReference type="SMR" id="Q67H92"/>
<dbReference type="GO" id="GO:0009535">
    <property type="term" value="C:chloroplast thylakoid membrane"/>
    <property type="evidence" value="ECO:0007669"/>
    <property type="project" value="UniProtKB-SubCell"/>
</dbReference>
<dbReference type="GO" id="GO:0009539">
    <property type="term" value="C:photosystem II reaction center"/>
    <property type="evidence" value="ECO:0007669"/>
    <property type="project" value="InterPro"/>
</dbReference>
<dbReference type="GO" id="GO:0015979">
    <property type="term" value="P:photosynthesis"/>
    <property type="evidence" value="ECO:0007669"/>
    <property type="project" value="UniProtKB-UniRule"/>
</dbReference>
<dbReference type="HAMAP" id="MF_01317">
    <property type="entry name" value="PSII_PsbL"/>
    <property type="match status" value="1"/>
</dbReference>
<dbReference type="InterPro" id="IPR003372">
    <property type="entry name" value="PSII_PsbL"/>
</dbReference>
<dbReference type="InterPro" id="IPR037266">
    <property type="entry name" value="PSII_PsbL_sf"/>
</dbReference>
<dbReference type="NCBIfam" id="NF001972">
    <property type="entry name" value="PRK00753.1"/>
    <property type="match status" value="1"/>
</dbReference>
<dbReference type="Pfam" id="PF02419">
    <property type="entry name" value="PsbL"/>
    <property type="match status" value="1"/>
</dbReference>
<dbReference type="SUPFAM" id="SSF161017">
    <property type="entry name" value="Photosystem II reaction center protein L, PsbL"/>
    <property type="match status" value="1"/>
</dbReference>
<evidence type="ECO:0000255" key="1">
    <source>
        <dbReference type="HAMAP-Rule" id="MF_01317"/>
    </source>
</evidence>
<geneLocation type="chloroplast"/>
<protein>
    <recommendedName>
        <fullName evidence="1">Photosystem II reaction center protein L</fullName>
        <shortName evidence="1">PSII-L</shortName>
    </recommendedName>
</protein>
<sequence length="38" mass="4497">MTQSNPNEQNVELNRTSLYWGLLLIFVLAVLFSNYFFN</sequence>
<comment type="function">
    <text evidence="1">One of the components of the core complex of photosystem II (PSII). PSII is a light-driven water:plastoquinone oxidoreductase that uses light energy to abstract electrons from H(2)O, generating O(2) and a proton gradient subsequently used for ATP formation. It consists of a core antenna complex that captures photons, and an electron transfer chain that converts photonic excitation into a charge separation. This subunit is found at the monomer-monomer interface and is required for correct PSII assembly and/or dimerization.</text>
</comment>
<comment type="subunit">
    <text evidence="1">PSII is composed of 1 copy each of membrane proteins PsbA, PsbB, PsbC, PsbD, PsbE, PsbF, PsbH, PsbI, PsbJ, PsbK, PsbL, PsbM, PsbT, PsbX, PsbY, PsbZ, Psb30/Ycf12, at least 3 peripheral proteins of the oxygen-evolving complex and a large number of cofactors. It forms dimeric complexes.</text>
</comment>
<comment type="subcellular location">
    <subcellularLocation>
        <location evidence="1">Plastid</location>
        <location evidence="1">Chloroplast thylakoid membrane</location>
        <topology evidence="1">Single-pass membrane protein</topology>
    </subcellularLocation>
</comment>
<comment type="similarity">
    <text evidence="1">Belongs to the PsbL family.</text>
</comment>
<reference key="1">
    <citation type="submission" date="2002-09" db="EMBL/GenBank/DDBJ databases">
        <title>Phylogenetic relationships among the major lineages of Asparagales based on a large chloroplast data set.</title>
        <authorList>
            <person name="McPherson M.A."/>
            <person name="Rai H.S."/>
            <person name="Wong W.A."/>
            <person name="Graham S.W."/>
        </authorList>
    </citation>
    <scope>NUCLEOTIDE SEQUENCE [GENOMIC DNA]</scope>
</reference>
<gene>
    <name evidence="1" type="primary">psbL</name>
</gene>
<accession>Q67H92</accession>
<proteinExistence type="inferred from homology"/>